<proteinExistence type="evidence at transcript level"/>
<accession>A0A2Z2U4G9</accession>
<organism evidence="6">
    <name type="scientific">Sus scrofa</name>
    <name type="common">Pig</name>
    <dbReference type="NCBI Taxonomy" id="9823"/>
    <lineage>
        <taxon>Eukaryota</taxon>
        <taxon>Metazoa</taxon>
        <taxon>Chordata</taxon>
        <taxon>Craniata</taxon>
        <taxon>Vertebrata</taxon>
        <taxon>Euteleostomi</taxon>
        <taxon>Mammalia</taxon>
        <taxon>Eutheria</taxon>
        <taxon>Laurasiatheria</taxon>
        <taxon>Artiodactyla</taxon>
        <taxon>Suina</taxon>
        <taxon>Suidae</taxon>
        <taxon>Sus</taxon>
    </lineage>
</organism>
<sequence>MPPARLRHPHLLLLLLLACQPQAPAAQAMDFLFQKWKLYGDQCLRNLSLLPPPTELVCNRTFDKYSCWPDTPPNTTANISCPWYLPWYHKVQHRLVFKRCGPDGQWVRGPRGQPWRNASQCQVDDEELGVQREVAEMYSSFQAMYTAGYSLSLAALLLALAILLGLSKLHCTRNYIHANLLASFVLRASSVLALDALLKTRYSQRLGDDLSVSIWLSDEAVAGCRVAAVFMQYGVVANYCWLLVEGVYLHSLLRQATIPERSCFPLYLAIGWGAPMLFVIPWAVVKCLFENIQCWTSNDNMGFWWILRFPVFLAILINFSIFIRVLHVLVAKLRAHQMRCTDYKFRLARSTLTLIPLLGVHEVVFAFVTDEHAQGALRSAKLFFDLFLSSFQGLLVAVLYCFLNKEVQAELLRRWHRWREGKALQKAHRVGSHSARPPSGPPSEKLLLSTGGSSNGTSQEPSAETHLASGLPGVAENPF</sequence>
<name>GLR_PIG</name>
<protein>
    <recommendedName>
        <fullName evidence="6">Glucagon receptor</fullName>
        <shortName evidence="5">GL-R</shortName>
    </recommendedName>
</protein>
<feature type="signal peptide" evidence="2">
    <location>
        <begin position="1"/>
        <end position="25"/>
    </location>
</feature>
<feature type="chain" id="PRO_5041069808" description="Glucagon receptor" evidence="2">
    <location>
        <begin position="26"/>
        <end position="479"/>
    </location>
</feature>
<feature type="topological domain" description="Extracellular" evidence="1">
    <location>
        <begin position="26"/>
        <end position="136"/>
    </location>
</feature>
<feature type="transmembrane region" description="Helical; Name=1" evidence="1">
    <location>
        <begin position="137"/>
        <end position="161"/>
    </location>
</feature>
<feature type="topological domain" description="Cytoplasmic" evidence="1">
    <location>
        <begin position="162"/>
        <end position="173"/>
    </location>
</feature>
<feature type="transmembrane region" description="Helical; Name=2" evidence="1">
    <location>
        <begin position="174"/>
        <end position="198"/>
    </location>
</feature>
<feature type="topological domain" description="Extracellular" evidence="1">
    <location>
        <begin position="199"/>
        <end position="225"/>
    </location>
</feature>
<feature type="transmembrane region" description="Helical; Name=3" evidence="1">
    <location>
        <begin position="226"/>
        <end position="249"/>
    </location>
</feature>
<feature type="topological domain" description="Cytoplasmic" evidence="1">
    <location>
        <begin position="250"/>
        <end position="263"/>
    </location>
</feature>
<feature type="transmembrane region" description="Helical; Name=4" evidence="1">
    <location>
        <begin position="264"/>
        <end position="285"/>
    </location>
</feature>
<feature type="topological domain" description="Extracellular" evidence="1">
    <location>
        <begin position="286"/>
        <end position="303"/>
    </location>
</feature>
<feature type="transmembrane region" description="Helical; Name=5" evidence="1">
    <location>
        <begin position="304"/>
        <end position="326"/>
    </location>
</feature>
<feature type="topological domain" description="Cytoplasmic" evidence="1">
    <location>
        <begin position="327"/>
        <end position="350"/>
    </location>
</feature>
<feature type="transmembrane region" description="Helical; Name=6" evidence="1">
    <location>
        <begin position="351"/>
        <end position="369"/>
    </location>
</feature>
<feature type="topological domain" description="Extracellular" evidence="1">
    <location>
        <begin position="370"/>
        <end position="381"/>
    </location>
</feature>
<feature type="transmembrane region" description="Helical; Name=7" evidence="1">
    <location>
        <begin position="382"/>
        <end position="402"/>
    </location>
</feature>
<feature type="topological domain" description="Cytoplasmic" evidence="1">
    <location>
        <begin position="403"/>
        <end position="479"/>
    </location>
</feature>
<feature type="region of interest" description="Disordered" evidence="3">
    <location>
        <begin position="426"/>
        <end position="479"/>
    </location>
</feature>
<feature type="compositionally biased region" description="Low complexity" evidence="3">
    <location>
        <begin position="446"/>
        <end position="458"/>
    </location>
</feature>
<feature type="modified residue" description="Phosphoserine" evidence="1">
    <location>
        <position position="458"/>
    </location>
</feature>
<feature type="glycosylation site" description="N-linked (GlcNAc...) asparagine" evidence="2">
    <location>
        <position position="46"/>
    </location>
</feature>
<feature type="glycosylation site" description="N-linked (GlcNAc...) asparagine" evidence="2">
    <location>
        <position position="59"/>
    </location>
</feature>
<feature type="glycosylation site" description="N-linked (GlcNAc...) asparagine" evidence="2">
    <location>
        <position position="74"/>
    </location>
</feature>
<feature type="glycosylation site" description="N-linked (GlcNAc...) asparagine" evidence="2">
    <location>
        <position position="78"/>
    </location>
</feature>
<feature type="glycosylation site" description="N-linked (GlcNAc...) asparagine" evidence="2">
    <location>
        <position position="117"/>
    </location>
</feature>
<feature type="disulfide bond" evidence="1">
    <location>
        <begin position="43"/>
        <end position="67"/>
    </location>
</feature>
<feature type="disulfide bond" evidence="1">
    <location>
        <begin position="58"/>
        <end position="100"/>
    </location>
</feature>
<feature type="disulfide bond" evidence="1">
    <location>
        <begin position="81"/>
        <end position="121"/>
    </location>
</feature>
<feature type="disulfide bond" evidence="1">
    <location>
        <begin position="224"/>
        <end position="294"/>
    </location>
</feature>
<reference evidence="7" key="1">
    <citation type="submission" date="2009-11" db="EMBL/GenBank/DDBJ databases">
        <authorList>
            <consortium name="Porcine genome sequencing project"/>
        </authorList>
    </citation>
    <scope>NUCLEOTIDE SEQUENCE [LARGE SCALE GENOMIC DNA]</scope>
    <source>
        <strain evidence="7">Duroc</strain>
    </source>
</reference>
<reference evidence="6" key="2">
    <citation type="submission" date="2017-09" db="EMBL/GenBank/DDBJ databases">
        <authorList>
            <person name="An C."/>
            <person name="Zhu W."/>
            <person name="Pei Y."/>
            <person name="Qi C."/>
            <person name="Zhang K."/>
            <person name="Guo J."/>
            <person name="Yang S."/>
            <person name="Li K."/>
        </authorList>
    </citation>
    <scope>NUCLEOTIDE SEQUENCE [MRNA]</scope>
    <source>
        <tissue evidence="6">Liver</tissue>
    </source>
</reference>
<reference evidence="5" key="3">
    <citation type="journal article" date="1994" name="J. Biol. Chem.">
        <title>Glucagon and glucagon-like peptide 1: selective receptor recognition via distinct peptide epitopes.</title>
        <authorList>
            <person name="Hjorth S.A."/>
            <person name="Adelhorst K."/>
            <person name="Pedersen B.B."/>
            <person name="Kirk O."/>
            <person name="Schwartz T.W."/>
        </authorList>
    </citation>
    <scope>FUNCTION</scope>
</reference>
<dbReference type="EMBL" id="MF807197">
    <property type="protein sequence ID" value="ATE90963.1"/>
    <property type="molecule type" value="mRNA"/>
</dbReference>
<dbReference type="RefSeq" id="XP_020922104.1">
    <property type="nucleotide sequence ID" value="XM_021066445.1"/>
</dbReference>
<dbReference type="SMR" id="A0A2Z2U4G9"/>
<dbReference type="GlyGen" id="A0A2Z2U4G9">
    <property type="glycosylation" value="5 sites"/>
</dbReference>
<dbReference type="Ensembl" id="ENSSSCT00000095792.1">
    <property type="protein sequence ID" value="ENSSSCP00000078286.1"/>
    <property type="gene ID" value="ENSSSCG00000034891.3"/>
</dbReference>
<dbReference type="Ensembl" id="ENSSSCT00085015401">
    <property type="protein sequence ID" value="ENSSSCP00085011014"/>
    <property type="gene ID" value="ENSSSCG00085008150"/>
</dbReference>
<dbReference type="Ensembl" id="ENSSSCT00090008442">
    <property type="protein sequence ID" value="ENSSSCP00090005070"/>
    <property type="gene ID" value="ENSSSCG00090004845"/>
</dbReference>
<dbReference type="Ensembl" id="ENSSSCT00105043294">
    <property type="protein sequence ID" value="ENSSSCP00105030181"/>
    <property type="gene ID" value="ENSSSCG00105022743"/>
</dbReference>
<dbReference type="Ensembl" id="ENSSSCT00110063155">
    <property type="protein sequence ID" value="ENSSSCP00110044220"/>
    <property type="gene ID" value="ENSSSCG00110033102"/>
</dbReference>
<dbReference type="Ensembl" id="ENSSSCT00115034254">
    <property type="protein sequence ID" value="ENSSSCP00115032528"/>
    <property type="gene ID" value="ENSSSCG00115019345"/>
</dbReference>
<dbReference type="GeneID" id="110255938"/>
<dbReference type="VGNC" id="VGNC:88383">
    <property type="gene designation" value="GCGR"/>
</dbReference>
<dbReference type="GeneTree" id="ENSGT00940000157969"/>
<dbReference type="Proteomes" id="UP000008227">
    <property type="component" value="Chromosome 12"/>
</dbReference>
<dbReference type="Proteomes" id="UP000314985">
    <property type="component" value="Unplaced"/>
</dbReference>
<dbReference type="Proteomes" id="UP000694570">
    <property type="component" value="Unplaced"/>
</dbReference>
<dbReference type="Proteomes" id="UP000694571">
    <property type="component" value="Unplaced"/>
</dbReference>
<dbReference type="Proteomes" id="UP000694720">
    <property type="component" value="Unplaced"/>
</dbReference>
<dbReference type="Proteomes" id="UP000694722">
    <property type="component" value="Unplaced"/>
</dbReference>
<dbReference type="Proteomes" id="UP000694723">
    <property type="component" value="Unplaced"/>
</dbReference>
<dbReference type="Proteomes" id="UP000694724">
    <property type="component" value="Unplaced"/>
</dbReference>
<dbReference type="Proteomes" id="UP000694725">
    <property type="component" value="Unplaced"/>
</dbReference>
<dbReference type="Proteomes" id="UP000694726">
    <property type="component" value="Unplaced"/>
</dbReference>
<dbReference type="Proteomes" id="UP000694727">
    <property type="component" value="Unplaced"/>
</dbReference>
<dbReference type="Proteomes" id="UP000694728">
    <property type="component" value="Unplaced"/>
</dbReference>
<dbReference type="GO" id="GO:0005886">
    <property type="term" value="C:plasma membrane"/>
    <property type="evidence" value="ECO:0007669"/>
    <property type="project" value="UniProtKB-SubCell"/>
</dbReference>
<dbReference type="GO" id="GO:0004967">
    <property type="term" value="F:glucagon receptor activity"/>
    <property type="evidence" value="ECO:0000314"/>
    <property type="project" value="UniProtKB"/>
</dbReference>
<dbReference type="GO" id="GO:0007166">
    <property type="term" value="P:cell surface receptor signaling pathway"/>
    <property type="evidence" value="ECO:0007669"/>
    <property type="project" value="InterPro"/>
</dbReference>
<dbReference type="CDD" id="cd15267">
    <property type="entry name" value="7tmB1_GCGR"/>
    <property type="match status" value="1"/>
</dbReference>
<dbReference type="FunFam" id="4.10.1240.10:FF:000009">
    <property type="entry name" value="Glucagon receptor"/>
    <property type="match status" value="1"/>
</dbReference>
<dbReference type="FunFam" id="1.20.1070.10:FF:000133">
    <property type="entry name" value="Glucagon receptor a"/>
    <property type="match status" value="1"/>
</dbReference>
<dbReference type="Gene3D" id="4.10.1240.10">
    <property type="entry name" value="GPCR, family 2, extracellular hormone receptor domain"/>
    <property type="match status" value="1"/>
</dbReference>
<dbReference type="Gene3D" id="1.20.1070.10">
    <property type="entry name" value="Rhodopsin 7-helix transmembrane proteins"/>
    <property type="match status" value="1"/>
</dbReference>
<dbReference type="InterPro" id="IPR050332">
    <property type="entry name" value="GPCR_2"/>
</dbReference>
<dbReference type="InterPro" id="IPR017981">
    <property type="entry name" value="GPCR_2-like_7TM"/>
</dbReference>
<dbReference type="InterPro" id="IPR036445">
    <property type="entry name" value="GPCR_2_extracell_dom_sf"/>
</dbReference>
<dbReference type="InterPro" id="IPR001879">
    <property type="entry name" value="GPCR_2_extracellular_dom"/>
</dbReference>
<dbReference type="InterPro" id="IPR003290">
    <property type="entry name" value="GPCR_2_GLP1/glucagon_rcpt"/>
</dbReference>
<dbReference type="InterPro" id="IPR003291">
    <property type="entry name" value="GPCR_2_glucagon_rcpt"/>
</dbReference>
<dbReference type="InterPro" id="IPR000832">
    <property type="entry name" value="GPCR_2_secretin-like"/>
</dbReference>
<dbReference type="InterPro" id="IPR017983">
    <property type="entry name" value="GPCR_2_secretin-like_CS"/>
</dbReference>
<dbReference type="PANTHER" id="PTHR45620:SF29">
    <property type="entry name" value="GLUCAGON RECEPTOR"/>
    <property type="match status" value="1"/>
</dbReference>
<dbReference type="PANTHER" id="PTHR45620">
    <property type="entry name" value="PDF RECEPTOR-LIKE PROTEIN-RELATED"/>
    <property type="match status" value="1"/>
</dbReference>
<dbReference type="Pfam" id="PF00002">
    <property type="entry name" value="7tm_2"/>
    <property type="match status" value="1"/>
</dbReference>
<dbReference type="Pfam" id="PF02793">
    <property type="entry name" value="HRM"/>
    <property type="match status" value="1"/>
</dbReference>
<dbReference type="PRINTS" id="PR01353">
    <property type="entry name" value="GLUCAGNFAMLY"/>
</dbReference>
<dbReference type="PRINTS" id="PR01354">
    <property type="entry name" value="GLUCAGONR"/>
</dbReference>
<dbReference type="PRINTS" id="PR00249">
    <property type="entry name" value="GPCRSECRETIN"/>
</dbReference>
<dbReference type="SMART" id="SM00008">
    <property type="entry name" value="HormR"/>
    <property type="match status" value="1"/>
</dbReference>
<dbReference type="SUPFAM" id="SSF81321">
    <property type="entry name" value="Family A G protein-coupled receptor-like"/>
    <property type="match status" value="1"/>
</dbReference>
<dbReference type="SUPFAM" id="SSF111418">
    <property type="entry name" value="Hormone receptor domain"/>
    <property type="match status" value="1"/>
</dbReference>
<dbReference type="PROSITE" id="PS00649">
    <property type="entry name" value="G_PROTEIN_RECEP_F2_1"/>
    <property type="match status" value="1"/>
</dbReference>
<dbReference type="PROSITE" id="PS00650">
    <property type="entry name" value="G_PROTEIN_RECEP_F2_2"/>
    <property type="match status" value="1"/>
</dbReference>
<dbReference type="PROSITE" id="PS50227">
    <property type="entry name" value="G_PROTEIN_RECEP_F2_3"/>
    <property type="match status" value="1"/>
</dbReference>
<dbReference type="PROSITE" id="PS50261">
    <property type="entry name" value="G_PROTEIN_RECEP_F2_4"/>
    <property type="match status" value="1"/>
</dbReference>
<comment type="function">
    <text evidence="1 4">G-protein coupled receptor for glucagon that plays a central role in the regulation of blood glucose levels and glucose homeostasis (PubMed:7527026). Regulates the rate of hepatic glucose production by promoting glycogen hydrolysis and gluconeogenesis (By similarity). Plays an important role in mediating the responses to fasting. Ligand binding causes a conformation change that triggers signaling via guanine nucleotide-binding proteins (G proteins) and modulates the activity of down-stream effectors, such as adenylate cyclase (By similarity). Promotes activation of adenylate cyclase (By similarity). Besides, plays a role in signaling via a phosphatidylinositol-calcium second messenger system (By similarity).</text>
</comment>
<comment type="subcellular location">
    <subcellularLocation>
        <location evidence="1">Cell membrane</location>
        <topology evidence="2">Multi-pass membrane protein</topology>
    </subcellularLocation>
</comment>
<comment type="PTM">
    <text evidence="1">Ligand-binding promotes phosphorylation of serine residues in the C-terminal cytoplasmic domain. Phosphorylation is important for receptor endocytosis after ligand-binding.</text>
</comment>
<comment type="miscellaneous">
    <text evidence="4">Selective recognition of glucagon over glucagon-like peptide is determined by residues located at the N-terminal end of the glucagon peptide.</text>
</comment>
<comment type="similarity">
    <text evidence="5">Belongs to the G-protein coupled receptor 2 family.</text>
</comment>
<keyword id="KW-1003">Cell membrane</keyword>
<keyword id="KW-1015">Disulfide bond</keyword>
<keyword id="KW-0297">G-protein coupled receptor</keyword>
<keyword id="KW-0325">Glycoprotein</keyword>
<keyword id="KW-0472">Membrane</keyword>
<keyword id="KW-0597">Phosphoprotein</keyword>
<keyword id="KW-0675">Receptor</keyword>
<keyword id="KW-1185">Reference proteome</keyword>
<keyword id="KW-0732">Signal</keyword>
<keyword id="KW-0807">Transducer</keyword>
<keyword id="KW-0812">Transmembrane</keyword>
<keyword id="KW-1133">Transmembrane helix</keyword>
<gene>
    <name evidence="8" type="primary">GCGR</name>
</gene>
<evidence type="ECO:0000250" key="1">
    <source>
        <dbReference type="UniProtKB" id="P47871"/>
    </source>
</evidence>
<evidence type="ECO:0000255" key="2"/>
<evidence type="ECO:0000256" key="3">
    <source>
        <dbReference type="SAM" id="MobiDB-lite"/>
    </source>
</evidence>
<evidence type="ECO:0000269" key="4">
    <source>
    </source>
</evidence>
<evidence type="ECO:0000305" key="5"/>
<evidence type="ECO:0000312" key="6">
    <source>
        <dbReference type="EMBL" id="ATE90963.1"/>
    </source>
</evidence>
<evidence type="ECO:0000312" key="7">
    <source>
        <dbReference type="Ensembl" id="ENSSSCP00000078286.1"/>
    </source>
</evidence>
<evidence type="ECO:0000312" key="8">
    <source>
        <dbReference type="VGNC" id="VGNC:88383"/>
    </source>
</evidence>